<feature type="chain" id="PRO_1000016732" description="Holliday junction resolvase RecU">
    <location>
        <begin position="1"/>
        <end position="213"/>
    </location>
</feature>
<feature type="binding site" evidence="1">
    <location>
        <position position="98"/>
    </location>
    <ligand>
        <name>Mg(2+)</name>
        <dbReference type="ChEBI" id="CHEBI:18420"/>
    </ligand>
</feature>
<feature type="binding site" evidence="1">
    <location>
        <position position="100"/>
    </location>
    <ligand>
        <name>Mg(2+)</name>
        <dbReference type="ChEBI" id="CHEBI:18420"/>
    </ligand>
</feature>
<feature type="binding site" evidence="1">
    <location>
        <position position="113"/>
    </location>
    <ligand>
        <name>Mg(2+)</name>
        <dbReference type="ChEBI" id="CHEBI:18420"/>
    </ligand>
</feature>
<feature type="binding site" evidence="1">
    <location>
        <position position="132"/>
    </location>
    <ligand>
        <name>Mg(2+)</name>
        <dbReference type="ChEBI" id="CHEBI:18420"/>
    </ligand>
</feature>
<feature type="site" description="Transition state stabilizer" evidence="1">
    <location>
        <position position="115"/>
    </location>
</feature>
<keyword id="KW-0963">Cytoplasm</keyword>
<keyword id="KW-0227">DNA damage</keyword>
<keyword id="KW-0233">DNA recombination</keyword>
<keyword id="KW-0234">DNA repair</keyword>
<keyword id="KW-0255">Endonuclease</keyword>
<keyword id="KW-0378">Hydrolase</keyword>
<keyword id="KW-0460">Magnesium</keyword>
<keyword id="KW-0479">Metal-binding</keyword>
<keyword id="KW-0540">Nuclease</keyword>
<keyword id="KW-1185">Reference proteome</keyword>
<gene>
    <name evidence="1" type="primary">recU</name>
    <name type="ordered locus">LSL_0932</name>
</gene>
<comment type="function">
    <text evidence="1">Endonuclease that resolves Holliday junction intermediates in genetic recombination. Cleaves mobile four-strand junctions by introducing symmetrical nicks in paired strands. Promotes annealing of linear ssDNA with homologous dsDNA. Required for DNA repair, homologous recombination and chromosome segregation.</text>
</comment>
<comment type="catalytic activity">
    <reaction evidence="1">
        <text>Endonucleolytic cleavage at a junction such as a reciprocal single-stranded crossover between two homologous DNA duplexes (Holliday junction).</text>
        <dbReference type="EC" id="3.1.21.10"/>
    </reaction>
</comment>
<comment type="cofactor">
    <cofactor evidence="1">
        <name>Mg(2+)</name>
        <dbReference type="ChEBI" id="CHEBI:18420"/>
    </cofactor>
    <text evidence="1">Binds 1 Mg(2+) ion per subunit.</text>
</comment>
<comment type="subcellular location">
    <subcellularLocation>
        <location evidence="1">Cytoplasm</location>
    </subcellularLocation>
</comment>
<comment type="similarity">
    <text evidence="1">Belongs to the RecU family.</text>
</comment>
<proteinExistence type="inferred from homology"/>
<reference key="1">
    <citation type="journal article" date="2006" name="Proc. Natl. Acad. Sci. U.S.A.">
        <title>Multireplicon genome architecture of Lactobacillus salivarius.</title>
        <authorList>
            <person name="Claesson M.J."/>
            <person name="Li Y."/>
            <person name="Leahy S."/>
            <person name="Canchaya C."/>
            <person name="van Pijkeren J.P."/>
            <person name="Cerdeno-Tarraga A.M."/>
            <person name="Parkhill J."/>
            <person name="Flynn S."/>
            <person name="O'Sullivan G.C."/>
            <person name="Collins J.K."/>
            <person name="Higgins D."/>
            <person name="Shanahan F."/>
            <person name="Fitzgerald G.F."/>
            <person name="van Sinderen D."/>
            <person name="O'Toole P.W."/>
        </authorList>
    </citation>
    <scope>NUCLEOTIDE SEQUENCE [LARGE SCALE GENOMIC DNA]</scope>
    <source>
        <strain>UCC118</strain>
    </source>
</reference>
<protein>
    <recommendedName>
        <fullName evidence="1">Holliday junction resolvase RecU</fullName>
        <ecNumber evidence="1">3.1.21.10</ecNumber>
    </recommendedName>
    <alternativeName>
        <fullName evidence="1">Recombination protein U homolog</fullName>
    </alternativeName>
</protein>
<accession>Q1WTM0</accession>
<sequence>MVFHYPNGRAYDYHKNENHPSLVNKVNHRSINHNRSKTIYGNRGMSLEEEINESNQYYLSQGIAVIHKKPIPIQIVSVDYPKRSAAVIKEAYFKQASTTDYNGVYKGKYLDFEAKETTNISSFPLRNFHAHQVEHMRACQKQGGICFTIVKFTKTDELFILPADLLFKYWDEQDKSRKSIPKAEIEQLGYKLNYSISPRIPFLKGVDLLIANS</sequence>
<name>RECU_LIGS1</name>
<organism>
    <name type="scientific">Ligilactobacillus salivarius (strain UCC118)</name>
    <name type="common">Lactobacillus salivarius</name>
    <dbReference type="NCBI Taxonomy" id="362948"/>
    <lineage>
        <taxon>Bacteria</taxon>
        <taxon>Bacillati</taxon>
        <taxon>Bacillota</taxon>
        <taxon>Bacilli</taxon>
        <taxon>Lactobacillales</taxon>
        <taxon>Lactobacillaceae</taxon>
        <taxon>Ligilactobacillus</taxon>
    </lineage>
</organism>
<evidence type="ECO:0000255" key="1">
    <source>
        <dbReference type="HAMAP-Rule" id="MF_00130"/>
    </source>
</evidence>
<dbReference type="EC" id="3.1.21.10" evidence="1"/>
<dbReference type="EMBL" id="CP000233">
    <property type="protein sequence ID" value="ABD99742.1"/>
    <property type="molecule type" value="Genomic_DNA"/>
</dbReference>
<dbReference type="RefSeq" id="WP_003700298.1">
    <property type="nucleotide sequence ID" value="NC_007929.1"/>
</dbReference>
<dbReference type="RefSeq" id="YP_535825.1">
    <property type="nucleotide sequence ID" value="NC_007929.1"/>
</dbReference>
<dbReference type="SMR" id="Q1WTM0"/>
<dbReference type="STRING" id="362948.LSL_0932"/>
<dbReference type="GeneID" id="89465705"/>
<dbReference type="KEGG" id="lsl:LSL_0932"/>
<dbReference type="PATRIC" id="fig|362948.14.peg.1007"/>
<dbReference type="HOGENOM" id="CLU_096340_0_0_9"/>
<dbReference type="OrthoDB" id="9783592at2"/>
<dbReference type="Proteomes" id="UP000006559">
    <property type="component" value="Chromosome"/>
</dbReference>
<dbReference type="GO" id="GO:0005737">
    <property type="term" value="C:cytoplasm"/>
    <property type="evidence" value="ECO:0007669"/>
    <property type="project" value="UniProtKB-SubCell"/>
</dbReference>
<dbReference type="GO" id="GO:0004519">
    <property type="term" value="F:endonuclease activity"/>
    <property type="evidence" value="ECO:0007669"/>
    <property type="project" value="UniProtKB-UniRule"/>
</dbReference>
<dbReference type="GO" id="GO:0000287">
    <property type="term" value="F:magnesium ion binding"/>
    <property type="evidence" value="ECO:0007669"/>
    <property type="project" value="UniProtKB-UniRule"/>
</dbReference>
<dbReference type="GO" id="GO:0003676">
    <property type="term" value="F:nucleic acid binding"/>
    <property type="evidence" value="ECO:0007669"/>
    <property type="project" value="InterPro"/>
</dbReference>
<dbReference type="GO" id="GO:0007059">
    <property type="term" value="P:chromosome segregation"/>
    <property type="evidence" value="ECO:0007669"/>
    <property type="project" value="UniProtKB-UniRule"/>
</dbReference>
<dbReference type="GO" id="GO:0006310">
    <property type="term" value="P:DNA recombination"/>
    <property type="evidence" value="ECO:0007669"/>
    <property type="project" value="UniProtKB-UniRule"/>
</dbReference>
<dbReference type="GO" id="GO:0006281">
    <property type="term" value="P:DNA repair"/>
    <property type="evidence" value="ECO:0007669"/>
    <property type="project" value="UniProtKB-UniRule"/>
</dbReference>
<dbReference type="CDD" id="cd22354">
    <property type="entry name" value="RecU-like"/>
    <property type="match status" value="1"/>
</dbReference>
<dbReference type="Gene3D" id="3.40.1350.10">
    <property type="match status" value="1"/>
</dbReference>
<dbReference type="HAMAP" id="MF_00130">
    <property type="entry name" value="RecU"/>
    <property type="match status" value="1"/>
</dbReference>
<dbReference type="InterPro" id="IPR004612">
    <property type="entry name" value="Resolv_RecU"/>
</dbReference>
<dbReference type="InterPro" id="IPR011335">
    <property type="entry name" value="Restrct_endonuc-II-like"/>
</dbReference>
<dbReference type="InterPro" id="IPR011856">
    <property type="entry name" value="tRNA_endonuc-like_dom_sf"/>
</dbReference>
<dbReference type="NCBIfam" id="NF002584">
    <property type="entry name" value="PRK02234.1-5"/>
    <property type="match status" value="1"/>
</dbReference>
<dbReference type="NCBIfam" id="TIGR00648">
    <property type="entry name" value="recU"/>
    <property type="match status" value="1"/>
</dbReference>
<dbReference type="Pfam" id="PF03838">
    <property type="entry name" value="RecU"/>
    <property type="match status" value="1"/>
</dbReference>
<dbReference type="PIRSF" id="PIRSF037785">
    <property type="entry name" value="RecU"/>
    <property type="match status" value="1"/>
</dbReference>
<dbReference type="SUPFAM" id="SSF52980">
    <property type="entry name" value="Restriction endonuclease-like"/>
    <property type="match status" value="1"/>
</dbReference>